<protein>
    <recommendedName>
        <fullName>Phosphatase NudJ</fullName>
        <ecNumber>3.6.1.-</ecNumber>
    </recommendedName>
</protein>
<proteinExistence type="inferred from homology"/>
<feature type="chain" id="PRO_0000342647" description="Phosphatase NudJ">
    <location>
        <begin position="1"/>
        <end position="153"/>
    </location>
</feature>
<feature type="domain" description="Nudix hydrolase" evidence="2">
    <location>
        <begin position="3"/>
        <end position="131"/>
    </location>
</feature>
<feature type="short sequence motif" description="Nudix box">
    <location>
        <begin position="36"/>
        <end position="57"/>
    </location>
</feature>
<evidence type="ECO:0000250" key="1"/>
<evidence type="ECO:0000255" key="2">
    <source>
        <dbReference type="PROSITE-ProRule" id="PRU00794"/>
    </source>
</evidence>
<evidence type="ECO:0000305" key="3"/>
<gene>
    <name type="primary">nudJ</name>
    <name type="ordered locus">SFV_1169</name>
</gene>
<comment type="cofactor">
    <cofactor evidence="1">
        <name>Mg(2+)</name>
        <dbReference type="ChEBI" id="CHEBI:18420"/>
    </cofactor>
</comment>
<comment type="subunit">
    <text evidence="1">Monomer.</text>
</comment>
<comment type="similarity">
    <text evidence="3">Belongs to the Nudix hydrolase family. NudJ subfamily.</text>
</comment>
<name>NUDJ_SHIF8</name>
<organism>
    <name type="scientific">Shigella flexneri serotype 5b (strain 8401)</name>
    <dbReference type="NCBI Taxonomy" id="373384"/>
    <lineage>
        <taxon>Bacteria</taxon>
        <taxon>Pseudomonadati</taxon>
        <taxon>Pseudomonadota</taxon>
        <taxon>Gammaproteobacteria</taxon>
        <taxon>Enterobacterales</taxon>
        <taxon>Enterobacteriaceae</taxon>
        <taxon>Shigella</taxon>
    </lineage>
</organism>
<dbReference type="EC" id="3.6.1.-"/>
<dbReference type="EMBL" id="CP000266">
    <property type="protein sequence ID" value="ABF03377.1"/>
    <property type="molecule type" value="Genomic_DNA"/>
</dbReference>
<dbReference type="RefSeq" id="WP_000476093.1">
    <property type="nucleotide sequence ID" value="NC_008258.1"/>
</dbReference>
<dbReference type="SMR" id="Q0T5N8"/>
<dbReference type="GeneID" id="75203720"/>
<dbReference type="KEGG" id="sfv:SFV_1169"/>
<dbReference type="HOGENOM" id="CLU_037162_6_1_6"/>
<dbReference type="Proteomes" id="UP000000659">
    <property type="component" value="Chromosome"/>
</dbReference>
<dbReference type="GO" id="GO:0017110">
    <property type="term" value="F:nucleoside diphosphate phosphatase activity"/>
    <property type="evidence" value="ECO:0007669"/>
    <property type="project" value="InterPro"/>
</dbReference>
<dbReference type="GO" id="GO:0017111">
    <property type="term" value="F:ribonucleoside triphosphate phosphatase activity"/>
    <property type="evidence" value="ECO:0007669"/>
    <property type="project" value="InterPro"/>
</dbReference>
<dbReference type="GO" id="GO:0004787">
    <property type="term" value="F:thiamine diphosphate phosphatase activity"/>
    <property type="evidence" value="ECO:0007669"/>
    <property type="project" value="InterPro"/>
</dbReference>
<dbReference type="CDD" id="cd03675">
    <property type="entry name" value="NUDIX_Hydrolase"/>
    <property type="match status" value="1"/>
</dbReference>
<dbReference type="FunFam" id="3.90.79.10:FF:000017">
    <property type="entry name" value="Phosphatase NudJ"/>
    <property type="match status" value="1"/>
</dbReference>
<dbReference type="Gene3D" id="3.90.79.10">
    <property type="entry name" value="Nucleoside Triphosphate Pyrophosphohydrolase"/>
    <property type="match status" value="1"/>
</dbReference>
<dbReference type="InterPro" id="IPR020476">
    <property type="entry name" value="Nudix_hydrolase"/>
</dbReference>
<dbReference type="InterPro" id="IPR015797">
    <property type="entry name" value="NUDIX_hydrolase-like_dom_sf"/>
</dbReference>
<dbReference type="InterPro" id="IPR020084">
    <property type="entry name" value="NUDIX_hydrolase_CS"/>
</dbReference>
<dbReference type="InterPro" id="IPR000086">
    <property type="entry name" value="NUDIX_hydrolase_dom"/>
</dbReference>
<dbReference type="InterPro" id="IPR033713">
    <property type="entry name" value="NudJ"/>
</dbReference>
<dbReference type="PANTHER" id="PTHR43222">
    <property type="entry name" value="NUDIX HYDROLASE 23"/>
    <property type="match status" value="1"/>
</dbReference>
<dbReference type="PANTHER" id="PTHR43222:SF11">
    <property type="entry name" value="PHOSPHATASE NUDJ"/>
    <property type="match status" value="1"/>
</dbReference>
<dbReference type="Pfam" id="PF00293">
    <property type="entry name" value="NUDIX"/>
    <property type="match status" value="1"/>
</dbReference>
<dbReference type="PRINTS" id="PR00502">
    <property type="entry name" value="NUDIXFAMILY"/>
</dbReference>
<dbReference type="SUPFAM" id="SSF55811">
    <property type="entry name" value="Nudix"/>
    <property type="match status" value="1"/>
</dbReference>
<dbReference type="PROSITE" id="PS51462">
    <property type="entry name" value="NUDIX"/>
    <property type="match status" value="1"/>
</dbReference>
<dbReference type="PROSITE" id="PS00893">
    <property type="entry name" value="NUDIX_BOX"/>
    <property type="match status" value="1"/>
</dbReference>
<accession>Q0T5N8</accession>
<reference key="1">
    <citation type="journal article" date="2006" name="BMC Genomics">
        <title>Complete genome sequence of Shigella flexneri 5b and comparison with Shigella flexneri 2a.</title>
        <authorList>
            <person name="Nie H."/>
            <person name="Yang F."/>
            <person name="Zhang X."/>
            <person name="Yang J."/>
            <person name="Chen L."/>
            <person name="Wang J."/>
            <person name="Xiong Z."/>
            <person name="Peng J."/>
            <person name="Sun L."/>
            <person name="Dong J."/>
            <person name="Xue Y."/>
            <person name="Xu X."/>
            <person name="Chen S."/>
            <person name="Yao Z."/>
            <person name="Shen Y."/>
            <person name="Jin Q."/>
        </authorList>
    </citation>
    <scope>NUCLEOTIDE SEQUENCE [LARGE SCALE GENOMIC DNA]</scope>
    <source>
        <strain>8401</strain>
    </source>
</reference>
<keyword id="KW-0378">Hydrolase</keyword>
<keyword id="KW-0460">Magnesium</keyword>
<sequence length="153" mass="17433">MFKPHVTVACVVHAEGKFLVVEETINGKALWNQPAGHLEADETLVEAAARELWEETGISAQPQHFIRMHQWIAPDKTPFLRFLFAIELEQICPTQPHDSDIDCCRWVSAEEILQASNLRSPLVAESIRCYQSGQRYPLEMIGDFNWPFTKGVI</sequence>